<feature type="chain" id="PRO_0000410183" description="PAN2-PAN3 deadenylation complex subunit PAN3">
    <location>
        <begin position="1"/>
        <end position="684"/>
    </location>
</feature>
<feature type="zinc finger region" description="C3H1-type" evidence="1">
    <location>
        <begin position="36"/>
        <end position="65"/>
    </location>
</feature>
<feature type="region of interest" description="Disordered" evidence="2">
    <location>
        <begin position="1"/>
        <end position="38"/>
    </location>
</feature>
<feature type="region of interest" description="Disordered" evidence="2">
    <location>
        <begin position="68"/>
        <end position="97"/>
    </location>
</feature>
<feature type="region of interest" description="Disordered" evidence="2">
    <location>
        <begin position="112"/>
        <end position="146"/>
    </location>
</feature>
<feature type="region of interest" description="Pseudokinase domain" evidence="1">
    <location>
        <begin position="263"/>
        <end position="544"/>
    </location>
</feature>
<feature type="region of interest" description="Disordered" evidence="2">
    <location>
        <begin position="387"/>
        <end position="412"/>
    </location>
</feature>
<feature type="region of interest" description="Knob domain" evidence="1">
    <location>
        <begin position="584"/>
        <end position="684"/>
    </location>
</feature>
<feature type="coiled-coil region" evidence="1">
    <location>
        <begin position="545"/>
        <end position="583"/>
    </location>
</feature>
<feature type="compositionally biased region" description="Basic and acidic residues" evidence="2">
    <location>
        <begin position="21"/>
        <end position="38"/>
    </location>
</feature>
<feature type="compositionally biased region" description="Pro residues" evidence="2">
    <location>
        <begin position="127"/>
        <end position="139"/>
    </location>
</feature>
<feature type="binding site" evidence="1">
    <location>
        <position position="326"/>
    </location>
    <ligand>
        <name>ATP</name>
        <dbReference type="ChEBI" id="CHEBI:30616"/>
    </ligand>
</feature>
<feature type="binding site" evidence="1">
    <location>
        <begin position="375"/>
        <end position="382"/>
    </location>
    <ligand>
        <name>ATP</name>
        <dbReference type="ChEBI" id="CHEBI:30616"/>
    </ligand>
</feature>
<feature type="binding site" evidence="1">
    <location>
        <begin position="444"/>
        <end position="445"/>
    </location>
    <ligand>
        <name>ATP</name>
        <dbReference type="ChEBI" id="CHEBI:30616"/>
    </ligand>
</feature>
<dbReference type="EMBL" id="AAEY01000049">
    <property type="protein sequence ID" value="EAL18457.1"/>
    <property type="molecule type" value="Genomic_DNA"/>
</dbReference>
<dbReference type="RefSeq" id="XP_773104.1">
    <property type="nucleotide sequence ID" value="XM_768011.1"/>
</dbReference>
<dbReference type="SMR" id="P0CP51"/>
<dbReference type="EnsemblFungi" id="AAW46022">
    <property type="protein sequence ID" value="AAW46022"/>
    <property type="gene ID" value="CNJ02470"/>
</dbReference>
<dbReference type="GeneID" id="4938439"/>
<dbReference type="KEGG" id="cnb:CNBJ0990"/>
<dbReference type="VEuPathDB" id="FungiDB:CNBJ0990"/>
<dbReference type="HOGENOM" id="CLU_016423_2_0_1"/>
<dbReference type="OrthoDB" id="4307at5206"/>
<dbReference type="GO" id="GO:0000932">
    <property type="term" value="C:P-body"/>
    <property type="evidence" value="ECO:0007669"/>
    <property type="project" value="TreeGrafter"/>
</dbReference>
<dbReference type="GO" id="GO:0031251">
    <property type="term" value="C:PAN complex"/>
    <property type="evidence" value="ECO:0007669"/>
    <property type="project" value="UniProtKB-UniRule"/>
</dbReference>
<dbReference type="GO" id="GO:0005524">
    <property type="term" value="F:ATP binding"/>
    <property type="evidence" value="ECO:0007669"/>
    <property type="project" value="UniProtKB-UniRule"/>
</dbReference>
<dbReference type="GO" id="GO:0008143">
    <property type="term" value="F:poly(A) binding"/>
    <property type="evidence" value="ECO:0007669"/>
    <property type="project" value="TreeGrafter"/>
</dbReference>
<dbReference type="GO" id="GO:0004672">
    <property type="term" value="F:protein kinase activity"/>
    <property type="evidence" value="ECO:0007669"/>
    <property type="project" value="InterPro"/>
</dbReference>
<dbReference type="GO" id="GO:0008270">
    <property type="term" value="F:zinc ion binding"/>
    <property type="evidence" value="ECO:0007669"/>
    <property type="project" value="UniProtKB-KW"/>
</dbReference>
<dbReference type="GO" id="GO:0006397">
    <property type="term" value="P:mRNA processing"/>
    <property type="evidence" value="ECO:0007669"/>
    <property type="project" value="UniProtKB-KW"/>
</dbReference>
<dbReference type="GO" id="GO:0000289">
    <property type="term" value="P:nuclear-transcribed mRNA poly(A) tail shortening"/>
    <property type="evidence" value="ECO:0007669"/>
    <property type="project" value="UniProtKB-UniRule"/>
</dbReference>
<dbReference type="FunFam" id="1.10.287.3700:FF:000001">
    <property type="entry name" value="PAN2-PAN3 deadenylation complex subunit PAN3"/>
    <property type="match status" value="1"/>
</dbReference>
<dbReference type="FunFam" id="1.10.510.10:FF:000750">
    <property type="entry name" value="PAN2-PAN3 deadenylation complex subunit PAN3"/>
    <property type="match status" value="1"/>
</dbReference>
<dbReference type="FunFam" id="1.20.5.5160:FF:000002">
    <property type="entry name" value="PAN2-PAN3 deadenylation complex subunit PAN3"/>
    <property type="match status" value="1"/>
</dbReference>
<dbReference type="Gene3D" id="1.10.287.3700">
    <property type="match status" value="1"/>
</dbReference>
<dbReference type="Gene3D" id="1.20.5.5160">
    <property type="match status" value="1"/>
</dbReference>
<dbReference type="Gene3D" id="6.10.250.3160">
    <property type="match status" value="1"/>
</dbReference>
<dbReference type="Gene3D" id="1.10.510.10">
    <property type="entry name" value="Transferase(Phosphotransferase) domain 1"/>
    <property type="match status" value="1"/>
</dbReference>
<dbReference type="HAMAP" id="MF_03181">
    <property type="entry name" value="PAN3"/>
    <property type="match status" value="1"/>
</dbReference>
<dbReference type="InterPro" id="IPR011009">
    <property type="entry name" value="Kinase-like_dom_sf"/>
</dbReference>
<dbReference type="InterPro" id="IPR030844">
    <property type="entry name" value="PAN3"/>
</dbReference>
<dbReference type="InterPro" id="IPR041332">
    <property type="entry name" value="Pan3_PK"/>
</dbReference>
<dbReference type="InterPro" id="IPR000719">
    <property type="entry name" value="Prot_kinase_dom"/>
</dbReference>
<dbReference type="InterPro" id="IPR000571">
    <property type="entry name" value="Znf_CCCH"/>
</dbReference>
<dbReference type="PANTHER" id="PTHR12272">
    <property type="entry name" value="DEADENYLATION COMPLEX SUBUNIT PAN3"/>
    <property type="match status" value="1"/>
</dbReference>
<dbReference type="PANTHER" id="PTHR12272:SF11">
    <property type="entry name" value="PAN2-PAN3 DEADENYLATION COMPLEX SUBUNIT PAN3"/>
    <property type="match status" value="1"/>
</dbReference>
<dbReference type="Pfam" id="PF18101">
    <property type="entry name" value="Pan3_PK"/>
    <property type="match status" value="1"/>
</dbReference>
<dbReference type="SUPFAM" id="SSF56112">
    <property type="entry name" value="Protein kinase-like (PK-like)"/>
    <property type="match status" value="1"/>
</dbReference>
<dbReference type="PROSITE" id="PS50011">
    <property type="entry name" value="PROTEIN_KINASE_DOM"/>
    <property type="match status" value="1"/>
</dbReference>
<dbReference type="PROSITE" id="PS50103">
    <property type="entry name" value="ZF_C3H1"/>
    <property type="match status" value="1"/>
</dbReference>
<proteinExistence type="inferred from homology"/>
<sequence length="684" mass="75082">MLPPPKSAAVQIVRPPSPSSEKAKEKEKKHSPEKRETAQRICRNVMIYGYCKYQDQGCIYYHPPAGADPSTPQNSSPVAHAPTPSAPTPLAGTPAREKPTLSIEHLAAPVFVPKGLDSSPRASTPSVPTPSAPTPPVWPSLPSTGLLPRQDVQVSAQPSHAQLSATASPMAYDDPSHIALSAAHAHAQAQALTHGILDPHAHAPPVDQSMYLPPRQPLDYNLYAAPLPSIGGNPLYPTHPHAFFVSDDLRRAIQAKQEAVYAGANGASAPGLPQELGVYHSLIPLPLPAPTAQCPPTQSQPSKVYGLPSPVYRATSEVDGNTYCLRRVEGFKLVNQLAFASMDTWRRMRHPNIVGLKEAFTTKTFGDNSLIMVYDYHPLSTTLYDEYLSPNPPEPSPASALANQPPKRRSSPPERILWSYVTQIANALKAIHSSGLAVRNLDASKILLTGKNRIRLNGCGVWDVLAFDNKTPVQAFQQEDLLSFGKLIISLTCDFFQPTLPFSLPLEHISRHYSSDLSNLILYLISKPAQGQIKSIDEVVKMMGPRILNELDAVQSYADVLENELGAEVENGRIVRLLTKLGFINERAEFELDPRWSDTGDRYILKLFRDYVFHSVGVDGKPILDLSHVLVCLNKLDAGLDERVMLVSRDDQSCLVVSYREIKHCIEAAFNELKNAGNNHRVHR</sequence>
<gene>
    <name evidence="1" type="primary">PAN3</name>
    <name type="ordered locus">CNBJ0990</name>
</gene>
<accession>P0CP51</accession>
<accession>Q55L85</accession>
<accession>Q5KA98</accession>
<protein>
    <recommendedName>
        <fullName evidence="1">PAN2-PAN3 deadenylation complex subunit PAN3</fullName>
    </recommendedName>
    <alternativeName>
        <fullName evidence="1">PAB1P-dependent poly(A)-specific ribonuclease</fullName>
    </alternativeName>
    <alternativeName>
        <fullName evidence="1">Poly(A)-nuclease deadenylation complex subunit 3</fullName>
        <shortName evidence="1">PAN deadenylation complex subunit 3</shortName>
    </alternativeName>
</protein>
<name>PAN3_CRYNB</name>
<organism>
    <name type="scientific">Cryptococcus neoformans var. neoformans serotype D (strain B-3501A)</name>
    <name type="common">Filobasidiella neoformans</name>
    <dbReference type="NCBI Taxonomy" id="283643"/>
    <lineage>
        <taxon>Eukaryota</taxon>
        <taxon>Fungi</taxon>
        <taxon>Dikarya</taxon>
        <taxon>Basidiomycota</taxon>
        <taxon>Agaricomycotina</taxon>
        <taxon>Tremellomycetes</taxon>
        <taxon>Tremellales</taxon>
        <taxon>Cryptococcaceae</taxon>
        <taxon>Cryptococcus</taxon>
        <taxon>Cryptococcus neoformans species complex</taxon>
    </lineage>
</organism>
<reference key="1">
    <citation type="journal article" date="2005" name="Science">
        <title>The genome of the basidiomycetous yeast and human pathogen Cryptococcus neoformans.</title>
        <authorList>
            <person name="Loftus B.J."/>
            <person name="Fung E."/>
            <person name="Roncaglia P."/>
            <person name="Rowley D."/>
            <person name="Amedeo P."/>
            <person name="Bruno D."/>
            <person name="Vamathevan J."/>
            <person name="Miranda M."/>
            <person name="Anderson I.J."/>
            <person name="Fraser J.A."/>
            <person name="Allen J.E."/>
            <person name="Bosdet I.E."/>
            <person name="Brent M.R."/>
            <person name="Chiu R."/>
            <person name="Doering T.L."/>
            <person name="Donlin M.J."/>
            <person name="D'Souza C.A."/>
            <person name="Fox D.S."/>
            <person name="Grinberg V."/>
            <person name="Fu J."/>
            <person name="Fukushima M."/>
            <person name="Haas B.J."/>
            <person name="Huang J.C."/>
            <person name="Janbon G."/>
            <person name="Jones S.J.M."/>
            <person name="Koo H.L."/>
            <person name="Krzywinski M.I."/>
            <person name="Kwon-Chung K.J."/>
            <person name="Lengeler K.B."/>
            <person name="Maiti R."/>
            <person name="Marra M.A."/>
            <person name="Marra R.E."/>
            <person name="Mathewson C.A."/>
            <person name="Mitchell T.G."/>
            <person name="Pertea M."/>
            <person name="Riggs F.R."/>
            <person name="Salzberg S.L."/>
            <person name="Schein J.E."/>
            <person name="Shvartsbeyn A."/>
            <person name="Shin H."/>
            <person name="Shumway M."/>
            <person name="Specht C.A."/>
            <person name="Suh B.B."/>
            <person name="Tenney A."/>
            <person name="Utterback T.R."/>
            <person name="Wickes B.L."/>
            <person name="Wortman J.R."/>
            <person name="Wye N.H."/>
            <person name="Kronstad J.W."/>
            <person name="Lodge J.K."/>
            <person name="Heitman J."/>
            <person name="Davis R.W."/>
            <person name="Fraser C.M."/>
            <person name="Hyman R.W."/>
        </authorList>
    </citation>
    <scope>NUCLEOTIDE SEQUENCE [LARGE SCALE GENOMIC DNA]</scope>
    <source>
        <strain>B-3501A</strain>
    </source>
</reference>
<evidence type="ECO:0000255" key="1">
    <source>
        <dbReference type="HAMAP-Rule" id="MF_03181"/>
    </source>
</evidence>
<evidence type="ECO:0000256" key="2">
    <source>
        <dbReference type="SAM" id="MobiDB-lite"/>
    </source>
</evidence>
<keyword id="KW-0067">ATP-binding</keyword>
<keyword id="KW-0175">Coiled coil</keyword>
<keyword id="KW-0963">Cytoplasm</keyword>
<keyword id="KW-0479">Metal-binding</keyword>
<keyword id="KW-0507">mRNA processing</keyword>
<keyword id="KW-0547">Nucleotide-binding</keyword>
<keyword id="KW-0862">Zinc</keyword>
<keyword id="KW-0863">Zinc-finger</keyword>
<comment type="function">
    <text evidence="1">Regulatory subunit of the poly(A)-nuclease (PAN) deadenylation complex, one of two cytoplasmic mRNA deadenylases involved in mRNA turnover. PAN specifically shortens poly(A) tails of RNA and the activity is stimulated by poly(A)-binding protein PAB1. PAN deadenylation is followed by rapid degradation of the shortened mRNA tails by the CCR4-NOT complex. Deadenylated mRNAs are then degraded by two alternative mechanisms, namely exosome-mediated 3'-5' exonucleolytic degradation, or deadenylation-dependent mRNA decaping and subsequent 5'-3' exonucleolytic degradation by XRN1. May also be involved in post-transcriptional maturation of mRNA poly(A) tails. PAN3 acts as a positive regulator for PAN activity, recruiting the catalytic subunit PAN2 to mRNA via its interaction with RNA and with PAB1.</text>
</comment>
<comment type="subunit">
    <text evidence="1">Homodimer. Forms a heterotrimer with a catalytic subunit PAN2 to form the poly(A)-nuclease (PAN) deadenylation complex. Interacts (via PAM-2 motif) with poly(A)-binding protein PAB1 (via PABC domain), conferring substrate specificity of the enzyme complex.</text>
</comment>
<comment type="subcellular location">
    <subcellularLocation>
        <location evidence="1">Cytoplasm</location>
    </subcellularLocation>
</comment>
<comment type="domain">
    <text evidence="1">The N-terminal zinc finger binds to poly(A) RNA.</text>
</comment>
<comment type="domain">
    <text evidence="1">Contains a pseudokinase domain. The protein kinase domain is predicted to be catalytically inactive because some of the residues important for catalytic activity are substituted and it lacks the equivalent of the binding site for a peptide substrate. However, it has retained an ATP-binding site and ATP-binding is required for mRNA degradation, stimulating the activity of the PAN2 nuclease in vitro. The nucleotide-binding site is juxtaposed to the RNase active site of PAN2 in the complex and may actually bind nucleosides of a poly(A) RNA rather than ATP, feeding the poly(A)-tail to the active site of the deadenylase and thus increasing the efficiency with which this distributive enzyme degrades oligo(A) RNAs.</text>
</comment>
<comment type="domain">
    <text evidence="1">The pseudokinase domain, the coiled-coil (CC), and C-terminal knob domain (CK) form a structural unit (PKC) that forms an extensive high-affinity interaction surface for PAN2.</text>
</comment>
<comment type="similarity">
    <text evidence="1">Belongs to the protein kinase superfamily. PAN3 family.</text>
</comment>